<protein>
    <recommendedName>
        <fullName>ABC transporter G family member 20</fullName>
    </recommendedName>
    <alternativeName>
        <fullName>ABC transporter ABCG.20</fullName>
    </alternativeName>
</protein>
<comment type="subcellular location">
    <subcellularLocation>
        <location evidence="5">Membrane</location>
        <topology evidence="5">Multi-pass membrane protein</topology>
    </subcellularLocation>
</comment>
<comment type="similarity">
    <text evidence="5">Belongs to the ABC transporter superfamily.</text>
</comment>
<name>ABCGK_DICDI</name>
<dbReference type="EMBL" id="AF482397">
    <property type="protein sequence ID" value="AAL91504.1"/>
    <property type="molecule type" value="Genomic_DNA"/>
</dbReference>
<dbReference type="EMBL" id="AAFI02000003">
    <property type="protein sequence ID" value="EAL73167.1"/>
    <property type="molecule type" value="Genomic_DNA"/>
</dbReference>
<dbReference type="RefSeq" id="XP_647230.1">
    <property type="nucleotide sequence ID" value="XM_642138.1"/>
</dbReference>
<dbReference type="FunCoup" id="Q8T674">
    <property type="interactions" value="1"/>
</dbReference>
<dbReference type="STRING" id="44689.Q8T674"/>
<dbReference type="PaxDb" id="44689-DDB0191238"/>
<dbReference type="EnsemblProtists" id="EAL73167">
    <property type="protein sequence ID" value="EAL73167"/>
    <property type="gene ID" value="DDB_G0267430"/>
</dbReference>
<dbReference type="GeneID" id="8616035"/>
<dbReference type="KEGG" id="ddi:DDB_G0267430"/>
<dbReference type="dictyBase" id="DDB_G0267430">
    <property type="gene designation" value="abcG20"/>
</dbReference>
<dbReference type="VEuPathDB" id="AmoebaDB:DDB_G0267430"/>
<dbReference type="eggNOG" id="KOG0059">
    <property type="taxonomic scope" value="Eukaryota"/>
</dbReference>
<dbReference type="HOGENOM" id="CLU_014367_1_0_1"/>
<dbReference type="InParanoid" id="Q8T674"/>
<dbReference type="OMA" id="SRYFIER"/>
<dbReference type="PhylomeDB" id="Q8T674"/>
<dbReference type="PRO" id="PR:Q8T674"/>
<dbReference type="Proteomes" id="UP000002195">
    <property type="component" value="Chromosome 1"/>
</dbReference>
<dbReference type="GO" id="GO:0043190">
    <property type="term" value="C:ATP-binding cassette (ABC) transporter complex"/>
    <property type="evidence" value="ECO:0000317"/>
    <property type="project" value="dictyBase"/>
</dbReference>
<dbReference type="GO" id="GO:0005886">
    <property type="term" value="C:plasma membrane"/>
    <property type="evidence" value="ECO:0000318"/>
    <property type="project" value="GO_Central"/>
</dbReference>
<dbReference type="GO" id="GO:0140359">
    <property type="term" value="F:ABC-type transporter activity"/>
    <property type="evidence" value="ECO:0007669"/>
    <property type="project" value="InterPro"/>
</dbReference>
<dbReference type="GO" id="GO:0005524">
    <property type="term" value="F:ATP binding"/>
    <property type="evidence" value="ECO:0007669"/>
    <property type="project" value="UniProtKB-KW"/>
</dbReference>
<dbReference type="GO" id="GO:0016887">
    <property type="term" value="F:ATP hydrolysis activity"/>
    <property type="evidence" value="ECO:0007669"/>
    <property type="project" value="InterPro"/>
</dbReference>
<dbReference type="GO" id="GO:0042626">
    <property type="term" value="F:ATPase-coupled transmembrane transporter activity"/>
    <property type="evidence" value="ECO:0000317"/>
    <property type="project" value="dictyBase"/>
</dbReference>
<dbReference type="GO" id="GO:0030587">
    <property type="term" value="P:sorocarp development"/>
    <property type="evidence" value="ECO:0007669"/>
    <property type="project" value="UniProtKB-ARBA"/>
</dbReference>
<dbReference type="CDD" id="cd03230">
    <property type="entry name" value="ABC_DR_subfamily_A"/>
    <property type="match status" value="1"/>
</dbReference>
<dbReference type="Gene3D" id="3.40.1710.10">
    <property type="entry name" value="abc type-2 transporter like domain"/>
    <property type="match status" value="1"/>
</dbReference>
<dbReference type="Gene3D" id="3.40.50.300">
    <property type="entry name" value="P-loop containing nucleotide triphosphate hydrolases"/>
    <property type="match status" value="1"/>
</dbReference>
<dbReference type="InterPro" id="IPR003593">
    <property type="entry name" value="AAA+_ATPase"/>
</dbReference>
<dbReference type="InterPro" id="IPR013525">
    <property type="entry name" value="ABC2_TM"/>
</dbReference>
<dbReference type="InterPro" id="IPR047817">
    <property type="entry name" value="ABC2_TM_bact-type"/>
</dbReference>
<dbReference type="InterPro" id="IPR000412">
    <property type="entry name" value="ABC_2_transport"/>
</dbReference>
<dbReference type="InterPro" id="IPR003439">
    <property type="entry name" value="ABC_transporter-like_ATP-bd"/>
</dbReference>
<dbReference type="InterPro" id="IPR017871">
    <property type="entry name" value="ABC_transporter-like_CS"/>
</dbReference>
<dbReference type="InterPro" id="IPR027417">
    <property type="entry name" value="P-loop_NTPase"/>
</dbReference>
<dbReference type="PANTHER" id="PTHR43038:SF3">
    <property type="entry name" value="ABC TRANSPORTER G FAMILY MEMBER 20 ISOFORM X1"/>
    <property type="match status" value="1"/>
</dbReference>
<dbReference type="PANTHER" id="PTHR43038">
    <property type="entry name" value="ATP-BINDING CASSETTE, SUB-FAMILY H, MEMBER 1"/>
    <property type="match status" value="1"/>
</dbReference>
<dbReference type="Pfam" id="PF12698">
    <property type="entry name" value="ABC2_membrane_3"/>
    <property type="match status" value="1"/>
</dbReference>
<dbReference type="Pfam" id="PF00005">
    <property type="entry name" value="ABC_tran"/>
    <property type="match status" value="1"/>
</dbReference>
<dbReference type="PRINTS" id="PR00164">
    <property type="entry name" value="ABC2TRNSPORT"/>
</dbReference>
<dbReference type="SMART" id="SM00382">
    <property type="entry name" value="AAA"/>
    <property type="match status" value="1"/>
</dbReference>
<dbReference type="SUPFAM" id="SSF52540">
    <property type="entry name" value="P-loop containing nucleoside triphosphate hydrolases"/>
    <property type="match status" value="1"/>
</dbReference>
<dbReference type="PROSITE" id="PS51012">
    <property type="entry name" value="ABC_TM2"/>
    <property type="match status" value="1"/>
</dbReference>
<dbReference type="PROSITE" id="PS00211">
    <property type="entry name" value="ABC_TRANSPORTER_1"/>
    <property type="match status" value="1"/>
</dbReference>
<dbReference type="PROSITE" id="PS50893">
    <property type="entry name" value="ABC_TRANSPORTER_2"/>
    <property type="match status" value="1"/>
</dbReference>
<gene>
    <name type="primary">abcG20</name>
    <name type="ORF">DDB_G0267430</name>
</gene>
<keyword id="KW-0067">ATP-binding</keyword>
<keyword id="KW-0472">Membrane</keyword>
<keyword id="KW-0547">Nucleotide-binding</keyword>
<keyword id="KW-1185">Reference proteome</keyword>
<keyword id="KW-0812">Transmembrane</keyword>
<keyword id="KW-1133">Transmembrane helix</keyword>
<keyword id="KW-0813">Transport</keyword>
<organism>
    <name type="scientific">Dictyostelium discoideum</name>
    <name type="common">Social amoeba</name>
    <dbReference type="NCBI Taxonomy" id="44689"/>
    <lineage>
        <taxon>Eukaryota</taxon>
        <taxon>Amoebozoa</taxon>
        <taxon>Evosea</taxon>
        <taxon>Eumycetozoa</taxon>
        <taxon>Dictyostelia</taxon>
        <taxon>Dictyosteliales</taxon>
        <taxon>Dictyosteliaceae</taxon>
        <taxon>Dictyostelium</taxon>
    </lineage>
</organism>
<feature type="chain" id="PRO_0000346860" description="ABC transporter G family member 20">
    <location>
        <begin position="1"/>
        <end position="730"/>
    </location>
</feature>
<feature type="transmembrane region" description="Helical" evidence="1">
    <location>
        <begin position="520"/>
        <end position="540"/>
    </location>
</feature>
<feature type="transmembrane region" description="Helical" evidence="1">
    <location>
        <begin position="572"/>
        <end position="592"/>
    </location>
</feature>
<feature type="transmembrane region" description="Helical" evidence="1">
    <location>
        <begin position="602"/>
        <end position="622"/>
    </location>
</feature>
<feature type="transmembrane region" description="Helical" evidence="1">
    <location>
        <begin position="634"/>
        <end position="654"/>
    </location>
</feature>
<feature type="transmembrane region" description="Helical" evidence="1">
    <location>
        <begin position="692"/>
        <end position="712"/>
    </location>
</feature>
<feature type="domain" description="ABC transporter" evidence="2">
    <location>
        <begin position="15"/>
        <end position="244"/>
    </location>
</feature>
<feature type="domain" description="ABC transmembrane type-2" evidence="3">
    <location>
        <begin position="489"/>
        <end position="717"/>
    </location>
</feature>
<feature type="region of interest" description="Disordered" evidence="4">
    <location>
        <begin position="281"/>
        <end position="303"/>
    </location>
</feature>
<feature type="compositionally biased region" description="Low complexity" evidence="4">
    <location>
        <begin position="282"/>
        <end position="298"/>
    </location>
</feature>
<feature type="binding site" evidence="2">
    <location>
        <begin position="47"/>
        <end position="54"/>
    </location>
    <ligand>
        <name>ATP</name>
        <dbReference type="ChEBI" id="CHEBI:30616"/>
    </ligand>
</feature>
<sequence length="730" mass="81025">MSNSNNNNNNKKLAISLKNVCRGYGNTKVIDNLNLQIKSGTINCLIGASGSGKTTILRTILGRLIPDSGEVLVFGKRPHDIGGVPGSICGFCPQEGALYYDLTLDHTLNFFSNVHQIPKDKFESKKNEIIKLLDLPQINSRSVGLLSGGQKKRVSLAVALLHSPKLLILDEPTVGIDMEVASNIWSYLRSLANSGVTIIITTHYINEAVGSDNVFLLRDGKILENGAPNYLIERYESQTLEEVFLKLCKRDNAQSIVDSKKNNNNSYFSSQEIIDVESHIVNNNNNNNNNNNNNNYNNNDDEENYNDDIYNDKKPLIGISKEDENNTNGSTNKESGILFRFYKVLLHSVAIGKRKFIQIIRNKVVLSFELLSPSVQVLLYFLAIGGSPKNLEFGVVNLDVGPIGSMYINSLSNTGIFNFHNYNSTTEAIEQIKSGNSFGLLDINAQFSEAILENFMNLSQYNPNGQIDLYMDFTNYQITLIVEQQLALSFETLAKQQANITMNPIKTVTPTVYGNPNSKFIDFLAPGMVCLISFAHAISITSVSFVKEKVDGSLDRLFAYGVRTSSIVFGHFLGHLPLLLVQITVLLLIAIYGFNVPIEGNIALVFLMTVSLAFVGMSLGLVISAVSRVETEAIQLSLGVYFPTLICSGTLWPLQSLPNWFVWFPNILPATHAGNAMRDIMLKGVGLHYKEVWVAFLVVLSWLIFLIFIAVLALNEKDKNLKLSCFKKRK</sequence>
<proteinExistence type="inferred from homology"/>
<accession>Q8T674</accession>
<accession>Q55GF4</accession>
<evidence type="ECO:0000255" key="1"/>
<evidence type="ECO:0000255" key="2">
    <source>
        <dbReference type="PROSITE-ProRule" id="PRU00434"/>
    </source>
</evidence>
<evidence type="ECO:0000255" key="3">
    <source>
        <dbReference type="PROSITE-ProRule" id="PRU00442"/>
    </source>
</evidence>
<evidence type="ECO:0000256" key="4">
    <source>
        <dbReference type="SAM" id="MobiDB-lite"/>
    </source>
</evidence>
<evidence type="ECO:0000305" key="5"/>
<reference key="1">
    <citation type="journal article" date="2002" name="Eukaryot. Cell">
        <title>Evolutionary analyses of ABC transporters of Dictyostelium discoideum.</title>
        <authorList>
            <person name="Anjard C."/>
            <person name="Loomis W.F."/>
        </authorList>
    </citation>
    <scope>NUCLEOTIDE SEQUENCE [GENOMIC DNA]</scope>
    <scope>NOMENCLATURE</scope>
    <source>
        <strain>AX4</strain>
    </source>
</reference>
<reference key="2">
    <citation type="journal article" date="2005" name="Nature">
        <title>The genome of the social amoeba Dictyostelium discoideum.</title>
        <authorList>
            <person name="Eichinger L."/>
            <person name="Pachebat J.A."/>
            <person name="Gloeckner G."/>
            <person name="Rajandream M.A."/>
            <person name="Sucgang R."/>
            <person name="Berriman M."/>
            <person name="Song J."/>
            <person name="Olsen R."/>
            <person name="Szafranski K."/>
            <person name="Xu Q."/>
            <person name="Tunggal B."/>
            <person name="Kummerfeld S."/>
            <person name="Madera M."/>
            <person name="Konfortov B.A."/>
            <person name="Rivero F."/>
            <person name="Bankier A.T."/>
            <person name="Lehmann R."/>
            <person name="Hamlin N."/>
            <person name="Davies R."/>
            <person name="Gaudet P."/>
            <person name="Fey P."/>
            <person name="Pilcher K."/>
            <person name="Chen G."/>
            <person name="Saunders D."/>
            <person name="Sodergren E.J."/>
            <person name="Davis P."/>
            <person name="Kerhornou A."/>
            <person name="Nie X."/>
            <person name="Hall N."/>
            <person name="Anjard C."/>
            <person name="Hemphill L."/>
            <person name="Bason N."/>
            <person name="Farbrother P."/>
            <person name="Desany B."/>
            <person name="Just E."/>
            <person name="Morio T."/>
            <person name="Rost R."/>
            <person name="Churcher C.M."/>
            <person name="Cooper J."/>
            <person name="Haydock S."/>
            <person name="van Driessche N."/>
            <person name="Cronin A."/>
            <person name="Goodhead I."/>
            <person name="Muzny D.M."/>
            <person name="Mourier T."/>
            <person name="Pain A."/>
            <person name="Lu M."/>
            <person name="Harper D."/>
            <person name="Lindsay R."/>
            <person name="Hauser H."/>
            <person name="James K.D."/>
            <person name="Quiles M."/>
            <person name="Madan Babu M."/>
            <person name="Saito T."/>
            <person name="Buchrieser C."/>
            <person name="Wardroper A."/>
            <person name="Felder M."/>
            <person name="Thangavelu M."/>
            <person name="Johnson D."/>
            <person name="Knights A."/>
            <person name="Loulseged H."/>
            <person name="Mungall K.L."/>
            <person name="Oliver K."/>
            <person name="Price C."/>
            <person name="Quail M.A."/>
            <person name="Urushihara H."/>
            <person name="Hernandez J."/>
            <person name="Rabbinowitsch E."/>
            <person name="Steffen D."/>
            <person name="Sanders M."/>
            <person name="Ma J."/>
            <person name="Kohara Y."/>
            <person name="Sharp S."/>
            <person name="Simmonds M.N."/>
            <person name="Spiegler S."/>
            <person name="Tivey A."/>
            <person name="Sugano S."/>
            <person name="White B."/>
            <person name="Walker D."/>
            <person name="Woodward J.R."/>
            <person name="Winckler T."/>
            <person name="Tanaka Y."/>
            <person name="Shaulsky G."/>
            <person name="Schleicher M."/>
            <person name="Weinstock G.M."/>
            <person name="Rosenthal A."/>
            <person name="Cox E.C."/>
            <person name="Chisholm R.L."/>
            <person name="Gibbs R.A."/>
            <person name="Loomis W.F."/>
            <person name="Platzer M."/>
            <person name="Kay R.R."/>
            <person name="Williams J.G."/>
            <person name="Dear P.H."/>
            <person name="Noegel A.A."/>
            <person name="Barrell B.G."/>
            <person name="Kuspa A."/>
        </authorList>
    </citation>
    <scope>NUCLEOTIDE SEQUENCE [LARGE SCALE GENOMIC DNA]</scope>
    <source>
        <strain>AX4</strain>
    </source>
</reference>